<dbReference type="EMBL" id="AE014075">
    <property type="protein sequence ID" value="AAN80373.1"/>
    <property type="status" value="ALT_INIT"/>
    <property type="molecule type" value="Genomic_DNA"/>
</dbReference>
<dbReference type="RefSeq" id="WP_000495766.1">
    <property type="nucleotide sequence ID" value="NZ_CP051263.1"/>
</dbReference>
<dbReference type="SMR" id="P65639"/>
<dbReference type="STRING" id="199310.c1914"/>
<dbReference type="GeneID" id="75171567"/>
<dbReference type="KEGG" id="ecc:c1914"/>
<dbReference type="eggNOG" id="ENOG5032SK6">
    <property type="taxonomic scope" value="Bacteria"/>
</dbReference>
<dbReference type="HOGENOM" id="CLU_186729_0_0_6"/>
<dbReference type="Proteomes" id="UP000001410">
    <property type="component" value="Chromosome"/>
</dbReference>
<dbReference type="InterPro" id="IPR019625">
    <property type="entry name" value="Biofilm-dep_modulation_Bdm_put"/>
</dbReference>
<dbReference type="NCBIfam" id="NF008515">
    <property type="entry name" value="PRK11436.1"/>
    <property type="match status" value="1"/>
</dbReference>
<dbReference type="Pfam" id="PF10684">
    <property type="entry name" value="BDM"/>
    <property type="match status" value="1"/>
</dbReference>
<reference key="1">
    <citation type="journal article" date="2002" name="Proc. Natl. Acad. Sci. U.S.A.">
        <title>Extensive mosaic structure revealed by the complete genome sequence of uropathogenic Escherichia coli.</title>
        <authorList>
            <person name="Welch R.A."/>
            <person name="Burland V."/>
            <person name="Plunkett G. III"/>
            <person name="Redford P."/>
            <person name="Roesch P."/>
            <person name="Rasko D."/>
            <person name="Buckles E.L."/>
            <person name="Liou S.-R."/>
            <person name="Boutin A."/>
            <person name="Hackett J."/>
            <person name="Stroud D."/>
            <person name="Mayhew G.F."/>
            <person name="Rose D.J."/>
            <person name="Zhou S."/>
            <person name="Schwartz D.C."/>
            <person name="Perna N.T."/>
            <person name="Mobley H.L.T."/>
            <person name="Donnenberg M.S."/>
            <person name="Blattner F.R."/>
        </authorList>
    </citation>
    <scope>NUCLEOTIDE SEQUENCE [LARGE SCALE GENOMIC DNA]</scope>
    <source>
        <strain>CFT073 / ATCC 700928 / UPEC</strain>
    </source>
</reference>
<sequence length="71" mass="7988">MFTYYQAENSTAEPALVNAIEQGLRAEHGVVTEDDILMELTKWVEASDNDILSDIYQQTINYVVSGQHPTL</sequence>
<evidence type="ECO:0000305" key="1"/>
<organism>
    <name type="scientific">Escherichia coli O6:H1 (strain CFT073 / ATCC 700928 / UPEC)</name>
    <dbReference type="NCBI Taxonomy" id="199310"/>
    <lineage>
        <taxon>Bacteria</taxon>
        <taxon>Pseudomonadati</taxon>
        <taxon>Pseudomonadota</taxon>
        <taxon>Gammaproteobacteria</taxon>
        <taxon>Enterobacterales</taxon>
        <taxon>Enterobacteriaceae</taxon>
        <taxon>Escherichia</taxon>
    </lineage>
</organism>
<feature type="chain" id="PRO_0000064900" description="Protein bdm homolog">
    <location>
        <begin position="1"/>
        <end position="71"/>
    </location>
</feature>
<protein>
    <recommendedName>
        <fullName>Protein bdm homolog</fullName>
    </recommendedName>
</protein>
<keyword id="KW-1185">Reference proteome</keyword>
<gene>
    <name type="primary">bdm</name>
    <name type="ordered locus">c1914</name>
</gene>
<comment type="sequence caution" evidence="1">
    <conflict type="erroneous initiation">
        <sequence resource="EMBL-CDS" id="AAN80373"/>
    </conflict>
</comment>
<name>BDM_ECOL6</name>
<accession>P65639</accession>
<accession>Q8XAT7</accession>
<proteinExistence type="predicted"/>